<keyword id="KW-1185">Reference proteome</keyword>
<name>MECA_LACPL</name>
<feature type="chain" id="PRO_0000212271" description="Adapter protein MecA">
    <location>
        <begin position="1"/>
        <end position="243"/>
    </location>
</feature>
<feature type="region of interest" description="Disordered" evidence="2">
    <location>
        <begin position="119"/>
        <end position="140"/>
    </location>
</feature>
<accession>Q88V56</accession>
<accession>F9UQF1</accession>
<proteinExistence type="inferred from homology"/>
<organism>
    <name type="scientific">Lactiplantibacillus plantarum (strain ATCC BAA-793 / NCIMB 8826 / WCFS1)</name>
    <name type="common">Lactobacillus plantarum</name>
    <dbReference type="NCBI Taxonomy" id="220668"/>
    <lineage>
        <taxon>Bacteria</taxon>
        <taxon>Bacillati</taxon>
        <taxon>Bacillota</taxon>
        <taxon>Bacilli</taxon>
        <taxon>Lactobacillales</taxon>
        <taxon>Lactobacillaceae</taxon>
        <taxon>Lactiplantibacillus</taxon>
    </lineage>
</organism>
<comment type="function">
    <text evidence="1">Enables the recognition and targeting of unfolded and aggregated proteins to the ClpC protease or to other proteins involved in proteolysis.</text>
</comment>
<comment type="subunit">
    <text evidence="1">Homodimer.</text>
</comment>
<comment type="domain">
    <text>The N-terminal domain probably binds unfolded/aggregated proteins; the C-terminal domain interacts with ClpC.</text>
</comment>
<comment type="similarity">
    <text evidence="1">Belongs to the MecA family.</text>
</comment>
<sequence>MEMERINEDTIRVVIGNDDLNERGIRVLDLLGNHKQIESFFYSILEEVDVDHQFQDNDAVTFQVLPNRNGLELFISKNSDNLQDTIAKATQSPDQSDDSDSQDDVSDYLKRKLMQTDTNQVEDGQGIAHNPTKDTNDLDPYLDDPDTPTKEYVLKFDQFEDLVSLAQLFRPEGLASNLFKYRDQYYLELVFFVDQSSTATIKDDVAVALEYAHLANISADVLLEHGEKIMSNAALETIRHYFK</sequence>
<protein>
    <recommendedName>
        <fullName evidence="1">Adapter protein MecA</fullName>
    </recommendedName>
</protein>
<reference key="1">
    <citation type="journal article" date="2003" name="Proc. Natl. Acad. Sci. U.S.A.">
        <title>Complete genome sequence of Lactobacillus plantarum WCFS1.</title>
        <authorList>
            <person name="Kleerebezem M."/>
            <person name="Boekhorst J."/>
            <person name="van Kranenburg R."/>
            <person name="Molenaar D."/>
            <person name="Kuipers O.P."/>
            <person name="Leer R."/>
            <person name="Tarchini R."/>
            <person name="Peters S.A."/>
            <person name="Sandbrink H.M."/>
            <person name="Fiers M.W.E.J."/>
            <person name="Stiekema W."/>
            <person name="Klein Lankhorst R.M."/>
            <person name="Bron P.A."/>
            <person name="Hoffer S.M."/>
            <person name="Nierop Groot M.N."/>
            <person name="Kerkhoven R."/>
            <person name="De Vries M."/>
            <person name="Ursing B."/>
            <person name="De Vos W.M."/>
            <person name="Siezen R.J."/>
        </authorList>
    </citation>
    <scope>NUCLEOTIDE SEQUENCE [LARGE SCALE GENOMIC DNA]</scope>
    <source>
        <strain>ATCC BAA-793 / NCIMB 8826 / WCFS1</strain>
    </source>
</reference>
<reference key="2">
    <citation type="journal article" date="2012" name="J. Bacteriol.">
        <title>Complete resequencing and reannotation of the Lactobacillus plantarum WCFS1 genome.</title>
        <authorList>
            <person name="Siezen R.J."/>
            <person name="Francke C."/>
            <person name="Renckens B."/>
            <person name="Boekhorst J."/>
            <person name="Wels M."/>
            <person name="Kleerebezem M."/>
            <person name="van Hijum S.A."/>
        </authorList>
    </citation>
    <scope>NUCLEOTIDE SEQUENCE [LARGE SCALE GENOMIC DNA]</scope>
    <scope>GENOME REANNOTATION</scope>
    <source>
        <strain>ATCC BAA-793 / NCIMB 8826 / WCFS1</strain>
    </source>
</reference>
<gene>
    <name evidence="1" type="primary">mecA</name>
    <name type="ordered locus">lp_2227</name>
</gene>
<evidence type="ECO:0000255" key="1">
    <source>
        <dbReference type="HAMAP-Rule" id="MF_01124"/>
    </source>
</evidence>
<evidence type="ECO:0000256" key="2">
    <source>
        <dbReference type="SAM" id="MobiDB-lite"/>
    </source>
</evidence>
<dbReference type="EMBL" id="AL935263">
    <property type="protein sequence ID" value="CCC79440.1"/>
    <property type="molecule type" value="Genomic_DNA"/>
</dbReference>
<dbReference type="RefSeq" id="WP_003640883.1">
    <property type="nucleotide sequence ID" value="NC_004567.2"/>
</dbReference>
<dbReference type="RefSeq" id="YP_004889954.1">
    <property type="nucleotide sequence ID" value="NC_004567.2"/>
</dbReference>
<dbReference type="SMR" id="Q88V56"/>
<dbReference type="STRING" id="220668.lp_2227"/>
<dbReference type="EnsemblBacteria" id="CCC79440">
    <property type="protein sequence ID" value="CCC79440"/>
    <property type="gene ID" value="lp_2227"/>
</dbReference>
<dbReference type="KEGG" id="lpl:lp_2227"/>
<dbReference type="PATRIC" id="fig|220668.9.peg.1882"/>
<dbReference type="eggNOG" id="COG4862">
    <property type="taxonomic scope" value="Bacteria"/>
</dbReference>
<dbReference type="HOGENOM" id="CLU_071496_2_0_9"/>
<dbReference type="OrthoDB" id="2360201at2"/>
<dbReference type="PhylomeDB" id="Q88V56"/>
<dbReference type="Proteomes" id="UP000000432">
    <property type="component" value="Chromosome"/>
</dbReference>
<dbReference type="GO" id="GO:0030674">
    <property type="term" value="F:protein-macromolecule adaptor activity"/>
    <property type="evidence" value="ECO:0007669"/>
    <property type="project" value="UniProtKB-UniRule"/>
</dbReference>
<dbReference type="Gene3D" id="3.30.70.1950">
    <property type="match status" value="1"/>
</dbReference>
<dbReference type="HAMAP" id="MF_01124">
    <property type="entry name" value="MecA"/>
    <property type="match status" value="1"/>
</dbReference>
<dbReference type="InterPro" id="IPR038471">
    <property type="entry name" value="MecA_C_sf"/>
</dbReference>
<dbReference type="InterPro" id="IPR008681">
    <property type="entry name" value="Neg-reg_MecA"/>
</dbReference>
<dbReference type="PANTHER" id="PTHR39161">
    <property type="entry name" value="ADAPTER PROTEIN MECA"/>
    <property type="match status" value="1"/>
</dbReference>
<dbReference type="PANTHER" id="PTHR39161:SF1">
    <property type="entry name" value="ADAPTER PROTEIN MECA 1"/>
    <property type="match status" value="1"/>
</dbReference>
<dbReference type="Pfam" id="PF05389">
    <property type="entry name" value="MecA"/>
    <property type="match status" value="1"/>
</dbReference>
<dbReference type="PIRSF" id="PIRSF029008">
    <property type="entry name" value="MecA"/>
    <property type="match status" value="1"/>
</dbReference>